<name>GFRP_HUMAN</name>
<gene>
    <name type="primary">GCHFR</name>
    <name type="synonym">GFRP</name>
</gene>
<feature type="initiator methionine" description="Removed" evidence="2">
    <location>
        <position position="1"/>
    </location>
</feature>
<feature type="chain" id="PRO_0000189675" description="GTP cyclohydrolase 1 feedback regulatory protein">
    <location>
        <begin position="2"/>
        <end position="84"/>
    </location>
</feature>
<feature type="splice variant" id="VSP_055592" description="In isoform 2." evidence="5">
    <location>
        <begin position="13"/>
        <end position="23"/>
    </location>
</feature>
<feature type="strand" evidence="9">
    <location>
        <begin position="3"/>
        <end position="10"/>
    </location>
</feature>
<feature type="strand" evidence="8">
    <location>
        <begin position="12"/>
        <end position="14"/>
    </location>
</feature>
<feature type="strand" evidence="9">
    <location>
        <begin position="17"/>
        <end position="21"/>
    </location>
</feature>
<feature type="helix" evidence="9">
    <location>
        <begin position="26"/>
        <end position="31"/>
    </location>
</feature>
<feature type="strand" evidence="9">
    <location>
        <begin position="35"/>
        <end position="37"/>
    </location>
</feature>
<feature type="strand" evidence="7">
    <location>
        <begin position="42"/>
        <end position="44"/>
    </location>
</feature>
<feature type="strand" evidence="9">
    <location>
        <begin position="46"/>
        <end position="51"/>
    </location>
</feature>
<feature type="helix" evidence="9">
    <location>
        <begin position="53"/>
        <end position="62"/>
    </location>
</feature>
<feature type="strand" evidence="9">
    <location>
        <begin position="66"/>
        <end position="73"/>
    </location>
</feature>
<feature type="strand" evidence="9">
    <location>
        <begin position="76"/>
        <end position="82"/>
    </location>
</feature>
<evidence type="ECO:0000250" key="1"/>
<evidence type="ECO:0000269" key="2">
    <source>
    </source>
</evidence>
<evidence type="ECO:0000269" key="3">
    <source>
    </source>
</evidence>
<evidence type="ECO:0000269" key="4">
    <source>
    </source>
</evidence>
<evidence type="ECO:0000303" key="5">
    <source>
    </source>
</evidence>
<evidence type="ECO:0000305" key="6"/>
<evidence type="ECO:0007829" key="7">
    <source>
        <dbReference type="PDB" id="7ACC"/>
    </source>
</evidence>
<evidence type="ECO:0007829" key="8">
    <source>
        <dbReference type="PDB" id="7AL9"/>
    </source>
</evidence>
<evidence type="ECO:0007829" key="9">
    <source>
        <dbReference type="PDB" id="7ALC"/>
    </source>
</evidence>
<sequence length="84" mass="9698">MPYLLISTQIRMEVGPTMVGDEQSDPELMQHLGASKRRALGNNFYEYYVDDPPRIVLDKLERRGFRVLSMTGVGQTLVWCLHKE</sequence>
<accession>P30047</accession>
<accession>B2R4L6</accession>
<accession>B7ZLM8</accession>
<accession>Q2M1Q2</accession>
<accession>Q99749</accession>
<proteinExistence type="evidence at protein level"/>
<protein>
    <recommendedName>
        <fullName>GTP cyclohydrolase 1 feedback regulatory protein</fullName>
        <shortName>GFRP</shortName>
    </recommendedName>
    <alternativeName>
        <fullName>GTP cyclohydrolase I feedback regulatory protein</fullName>
    </alternativeName>
    <alternativeName>
        <fullName>p35</fullName>
    </alternativeName>
</protein>
<comment type="function">
    <text evidence="4">Mediates tetrahydrobiopterin inhibition of GTP cyclohydrolase 1. This inhibition is reversed by L-phenylalanine.</text>
</comment>
<comment type="subunit">
    <text evidence="1 3">Homopentamer. Forms a complex with GCH1 where a GCH1 homodecamer is sandwiched by two GFRP homopentamers (By similarity). Interacts with GCH1.</text>
</comment>
<comment type="subcellular location">
    <subcellularLocation>
        <location evidence="4">Nucleus</location>
    </subcellularLocation>
    <subcellularLocation>
        <location evidence="4">Nucleus membrane</location>
    </subcellularLocation>
    <subcellularLocation>
        <location evidence="4">Cytoplasm</location>
        <location evidence="4">Cytosol</location>
    </subcellularLocation>
</comment>
<comment type="alternative products">
    <event type="alternative splicing"/>
    <isoform>
        <id>P30047-1</id>
        <name>1</name>
        <sequence type="displayed"/>
    </isoform>
    <isoform>
        <id>P30047-2</id>
        <name>2</name>
        <sequence type="described" ref="VSP_055592"/>
    </isoform>
</comment>
<comment type="tissue specificity">
    <text evidence="4">In epidermis, expressed predominantly in basal undifferentiated keratinocytes and in some but not all melanocytes (at protein level).</text>
</comment>
<comment type="similarity">
    <text evidence="6">Belongs to the GFRP family.</text>
</comment>
<keyword id="KW-0002">3D-structure</keyword>
<keyword id="KW-0025">Alternative splicing</keyword>
<keyword id="KW-0963">Cytoplasm</keyword>
<keyword id="KW-0903">Direct protein sequencing</keyword>
<keyword id="KW-0472">Membrane</keyword>
<keyword id="KW-0539">Nucleus</keyword>
<keyword id="KW-1267">Proteomics identification</keyword>
<keyword id="KW-1185">Reference proteome</keyword>
<organism>
    <name type="scientific">Homo sapiens</name>
    <name type="common">Human</name>
    <dbReference type="NCBI Taxonomy" id="9606"/>
    <lineage>
        <taxon>Eukaryota</taxon>
        <taxon>Metazoa</taxon>
        <taxon>Chordata</taxon>
        <taxon>Craniata</taxon>
        <taxon>Vertebrata</taxon>
        <taxon>Euteleostomi</taxon>
        <taxon>Mammalia</taxon>
        <taxon>Eutheria</taxon>
        <taxon>Euarchontoglires</taxon>
        <taxon>Primates</taxon>
        <taxon>Haplorrhini</taxon>
        <taxon>Catarrhini</taxon>
        <taxon>Hominidae</taxon>
        <taxon>Homo</taxon>
    </lineage>
</organism>
<dbReference type="EMBL" id="U78190">
    <property type="protein sequence ID" value="AAB37337.1"/>
    <property type="molecule type" value="Genomic_DNA"/>
</dbReference>
<dbReference type="EMBL" id="AK311872">
    <property type="protein sequence ID" value="BAG34813.1"/>
    <property type="molecule type" value="mRNA"/>
</dbReference>
<dbReference type="EMBL" id="AC012476">
    <property type="status" value="NOT_ANNOTATED_CDS"/>
    <property type="molecule type" value="Genomic_DNA"/>
</dbReference>
<dbReference type="EMBL" id="CH471125">
    <property type="protein sequence ID" value="EAW92443.1"/>
    <property type="molecule type" value="Genomic_DNA"/>
</dbReference>
<dbReference type="EMBL" id="BC112262">
    <property type="protein sequence ID" value="AAI12263.1"/>
    <property type="molecule type" value="mRNA"/>
</dbReference>
<dbReference type="EMBL" id="BC112264">
    <property type="protein sequence ID" value="AAI12265.1"/>
    <property type="molecule type" value="mRNA"/>
</dbReference>
<dbReference type="EMBL" id="BC143904">
    <property type="protein sequence ID" value="AAI43905.1"/>
    <property type="molecule type" value="mRNA"/>
</dbReference>
<dbReference type="CCDS" id="CCDS10064.1">
    <molecule id="P30047-1"/>
</dbReference>
<dbReference type="RefSeq" id="NP_005249.1">
    <molecule id="P30047-1"/>
    <property type="nucleotide sequence ID" value="NM_005258.3"/>
</dbReference>
<dbReference type="PDB" id="6Z80">
    <property type="method" value="EM"/>
    <property type="resolution" value="3.00 A"/>
    <property type="chains" value="K/L/M/N/O/P/Q/R/S/T=1-84"/>
</dbReference>
<dbReference type="PDB" id="6Z85">
    <property type="method" value="EM"/>
    <property type="resolution" value="2.90 A"/>
    <property type="chains" value="K/L/M/N/O/P/Q/R/S/T=1-84"/>
</dbReference>
<dbReference type="PDB" id="7ACC">
    <property type="method" value="X-ray"/>
    <property type="resolution" value="2.04 A"/>
    <property type="chains" value="A/B/C/D/E/F/G/H/I/J=1-84"/>
</dbReference>
<dbReference type="PDB" id="7AL9">
    <property type="method" value="X-ray"/>
    <property type="resolution" value="1.75 A"/>
    <property type="chains" value="A/B/C/D/E/F/G/H/I/J=1-84"/>
</dbReference>
<dbReference type="PDB" id="7ALA">
    <property type="method" value="X-ray"/>
    <property type="resolution" value="1.85 A"/>
    <property type="chains" value="F/G/H/I/J=1-84"/>
</dbReference>
<dbReference type="PDB" id="7ALB">
    <property type="method" value="X-ray"/>
    <property type="resolution" value="1.98 A"/>
    <property type="chains" value="a/b/c/d/e/f/g/h/i/j/k/l/m/n/o/p/q/r/s/t=1-84"/>
</dbReference>
<dbReference type="PDB" id="7ALC">
    <property type="method" value="X-ray"/>
    <property type="resolution" value="1.73 A"/>
    <property type="chains" value="F/G/H/I/J=1-84"/>
</dbReference>
<dbReference type="PDB" id="7ALQ">
    <property type="method" value="X-ray"/>
    <property type="resolution" value="2.21 A"/>
    <property type="chains" value="a/b/c/d/e/f/g/h/i/j/k/l/m/n/o/p/q/r/s/t=1-84"/>
</dbReference>
<dbReference type="PDBsum" id="6Z80"/>
<dbReference type="PDBsum" id="6Z85"/>
<dbReference type="PDBsum" id="7ACC"/>
<dbReference type="PDBsum" id="7AL9"/>
<dbReference type="PDBsum" id="7ALA"/>
<dbReference type="PDBsum" id="7ALB"/>
<dbReference type="PDBsum" id="7ALC"/>
<dbReference type="PDBsum" id="7ALQ"/>
<dbReference type="EMDB" id="EMD-11113"/>
<dbReference type="EMDB" id="EMD-11114"/>
<dbReference type="SMR" id="P30047"/>
<dbReference type="BioGRID" id="108914">
    <property type="interactions" value="36"/>
</dbReference>
<dbReference type="FunCoup" id="P30047">
    <property type="interactions" value="769"/>
</dbReference>
<dbReference type="IntAct" id="P30047">
    <property type="interactions" value="15"/>
</dbReference>
<dbReference type="STRING" id="9606.ENSP00000260447"/>
<dbReference type="GlyGen" id="P30047">
    <property type="glycosylation" value="1 site"/>
</dbReference>
<dbReference type="iPTMnet" id="P30047"/>
<dbReference type="PhosphoSitePlus" id="P30047"/>
<dbReference type="BioMuta" id="GCHFR"/>
<dbReference type="DMDM" id="2506906"/>
<dbReference type="jPOST" id="P30047"/>
<dbReference type="MassIVE" id="P30047"/>
<dbReference type="PaxDb" id="9606-ENSP00000260447"/>
<dbReference type="PeptideAtlas" id="P30047"/>
<dbReference type="ProteomicsDB" id="54627">
    <molecule id="P30047-1"/>
</dbReference>
<dbReference type="ProteomicsDB" id="7228"/>
<dbReference type="Pumba" id="P30047"/>
<dbReference type="Antibodypedia" id="23158">
    <property type="antibodies" value="243 antibodies from 30 providers"/>
</dbReference>
<dbReference type="DNASU" id="2644"/>
<dbReference type="Ensembl" id="ENST00000260447.6">
    <molecule id="P30047-1"/>
    <property type="protein sequence ID" value="ENSP00000260447.4"/>
    <property type="gene ID" value="ENSG00000137880.6"/>
</dbReference>
<dbReference type="Ensembl" id="ENST00000559445.1">
    <molecule id="P30047-2"/>
    <property type="protein sequence ID" value="ENSP00000453871.1"/>
    <property type="gene ID" value="ENSG00000137880.6"/>
</dbReference>
<dbReference type="GeneID" id="2644"/>
<dbReference type="KEGG" id="hsa:2644"/>
<dbReference type="MANE-Select" id="ENST00000260447.6">
    <property type="protein sequence ID" value="ENSP00000260447.4"/>
    <property type="RefSeq nucleotide sequence ID" value="NM_005258.3"/>
    <property type="RefSeq protein sequence ID" value="NP_005249.1"/>
</dbReference>
<dbReference type="UCSC" id="uc001zmr.2">
    <molecule id="P30047-1"/>
    <property type="organism name" value="human"/>
</dbReference>
<dbReference type="AGR" id="HGNC:4194"/>
<dbReference type="CTD" id="2644"/>
<dbReference type="DisGeNET" id="2644"/>
<dbReference type="GeneCards" id="GCHFR"/>
<dbReference type="HGNC" id="HGNC:4194">
    <property type="gene designation" value="GCHFR"/>
</dbReference>
<dbReference type="HPA" id="ENSG00000137880">
    <property type="expression patterns" value="Tissue enriched (liver)"/>
</dbReference>
<dbReference type="MIM" id="602437">
    <property type="type" value="gene"/>
</dbReference>
<dbReference type="neXtProt" id="NX_P30047"/>
<dbReference type="OpenTargets" id="ENSG00000137880"/>
<dbReference type="PharmGKB" id="PA28609"/>
<dbReference type="VEuPathDB" id="HostDB:ENSG00000137880"/>
<dbReference type="eggNOG" id="ENOG502S4A0">
    <property type="taxonomic scope" value="Eukaryota"/>
</dbReference>
<dbReference type="GeneTree" id="ENSGT00440000033849"/>
<dbReference type="HOGENOM" id="CLU_195651_0_0_1"/>
<dbReference type="InParanoid" id="P30047"/>
<dbReference type="OMA" id="PNLMHYL"/>
<dbReference type="OrthoDB" id="64291at2759"/>
<dbReference type="PAN-GO" id="P30047">
    <property type="GO annotations" value="4 GO annotations based on evolutionary models"/>
</dbReference>
<dbReference type="PhylomeDB" id="P30047"/>
<dbReference type="TreeFam" id="TF329303"/>
<dbReference type="PathwayCommons" id="P30047"/>
<dbReference type="Reactome" id="R-HSA-1474151">
    <property type="pathway name" value="Tetrahydrobiopterin (BH4) synthesis, recycling, salvage and regulation"/>
</dbReference>
<dbReference type="SignaLink" id="P30047"/>
<dbReference type="SIGNOR" id="P30047"/>
<dbReference type="BioGRID-ORCS" id="2644">
    <property type="hits" value="6 hits in 1153 CRISPR screens"/>
</dbReference>
<dbReference type="GeneWiki" id="GCHFR"/>
<dbReference type="GenomeRNAi" id="2644"/>
<dbReference type="Pharos" id="P30047">
    <property type="development level" value="Tbio"/>
</dbReference>
<dbReference type="PRO" id="PR:P30047"/>
<dbReference type="Proteomes" id="UP000005640">
    <property type="component" value="Chromosome 15"/>
</dbReference>
<dbReference type="RNAct" id="P30047">
    <property type="molecule type" value="protein"/>
</dbReference>
<dbReference type="Bgee" id="ENSG00000137880">
    <property type="expression patterns" value="Expressed in right lobe of liver and 138 other cell types or tissues"/>
</dbReference>
<dbReference type="ExpressionAtlas" id="P30047">
    <property type="expression patterns" value="baseline and differential"/>
</dbReference>
<dbReference type="GO" id="GO:0005737">
    <property type="term" value="C:cytoplasm"/>
    <property type="evidence" value="ECO:0000314"/>
    <property type="project" value="UniProtKB"/>
</dbReference>
<dbReference type="GO" id="GO:0005829">
    <property type="term" value="C:cytosol"/>
    <property type="evidence" value="ECO:0000304"/>
    <property type="project" value="Reactome"/>
</dbReference>
<dbReference type="GO" id="GO:0030425">
    <property type="term" value="C:dendrite"/>
    <property type="evidence" value="ECO:0000314"/>
    <property type="project" value="UniProtKB"/>
</dbReference>
<dbReference type="GO" id="GO:0042470">
    <property type="term" value="C:melanosome"/>
    <property type="evidence" value="ECO:0000314"/>
    <property type="project" value="UniProtKB"/>
</dbReference>
<dbReference type="GO" id="GO:0031965">
    <property type="term" value="C:nuclear membrane"/>
    <property type="evidence" value="ECO:0000314"/>
    <property type="project" value="UniProtKB"/>
</dbReference>
<dbReference type="GO" id="GO:0005654">
    <property type="term" value="C:nucleoplasm"/>
    <property type="evidence" value="ECO:0000314"/>
    <property type="project" value="HPA"/>
</dbReference>
<dbReference type="GO" id="GO:0005634">
    <property type="term" value="C:nucleus"/>
    <property type="evidence" value="ECO:0000314"/>
    <property type="project" value="UniProtKB"/>
</dbReference>
<dbReference type="GO" id="GO:0004857">
    <property type="term" value="F:enzyme inhibitor activity"/>
    <property type="evidence" value="ECO:0007669"/>
    <property type="project" value="Ensembl"/>
</dbReference>
<dbReference type="GO" id="GO:0044549">
    <property type="term" value="F:GTP cyclohydrolase binding"/>
    <property type="evidence" value="ECO:0000318"/>
    <property type="project" value="GO_Central"/>
</dbReference>
<dbReference type="GO" id="GO:0060308">
    <property type="term" value="F:GTP cyclohydrolase I regulator activity"/>
    <property type="evidence" value="ECO:0007669"/>
    <property type="project" value="Ensembl"/>
</dbReference>
<dbReference type="GO" id="GO:0009890">
    <property type="term" value="P:negative regulation of biosynthetic process"/>
    <property type="evidence" value="ECO:0007669"/>
    <property type="project" value="InterPro"/>
</dbReference>
<dbReference type="GO" id="GO:0062014">
    <property type="term" value="P:negative regulation of small molecule metabolic process"/>
    <property type="evidence" value="ECO:0007669"/>
    <property type="project" value="Ensembl"/>
</dbReference>
<dbReference type="GO" id="GO:0045428">
    <property type="term" value="P:regulation of nitric oxide biosynthetic process"/>
    <property type="evidence" value="ECO:0000304"/>
    <property type="project" value="UniProtKB"/>
</dbReference>
<dbReference type="FunFam" id="3.30.1410.10:FF:000001">
    <property type="entry name" value="GTP cyclohydrolase 1 feedback regulatory protein"/>
    <property type="match status" value="1"/>
</dbReference>
<dbReference type="Gene3D" id="3.30.1410.10">
    <property type="entry name" value="GTP cyclohydrolase I feedback regulatory protein GFRP"/>
    <property type="match status" value="1"/>
</dbReference>
<dbReference type="InterPro" id="IPR036717">
    <property type="entry name" value="GFRP_sf"/>
</dbReference>
<dbReference type="InterPro" id="IPR009112">
    <property type="entry name" value="GTP_CycHdrlase_I_reg"/>
</dbReference>
<dbReference type="PANTHER" id="PTHR16852">
    <property type="entry name" value="GTP CYCLOHYDROLASE 1 FEEDBACK REGULATORY PROTEIN"/>
    <property type="match status" value="1"/>
</dbReference>
<dbReference type="PANTHER" id="PTHR16852:SF2">
    <property type="entry name" value="GTP CYCLOHYDROLASE 1 FEEDBACK REGULATORY PROTEIN"/>
    <property type="match status" value="1"/>
</dbReference>
<dbReference type="Pfam" id="PF06399">
    <property type="entry name" value="GFRP"/>
    <property type="match status" value="1"/>
</dbReference>
<dbReference type="SUPFAM" id="SSF69761">
    <property type="entry name" value="GTP cyclohydrolase I feedback regulatory protein, GFRP"/>
    <property type="match status" value="1"/>
</dbReference>
<reference key="1">
    <citation type="submission" date="1996-11" db="EMBL/GenBank/DDBJ databases">
        <title>Structure of the human GTP cyclohydrolase I feedback regulatory protein gene.</title>
        <authorList>
            <person name="Bonner T.I."/>
            <person name="Modi W.S."/>
            <person name="Milstein S."/>
        </authorList>
    </citation>
    <scope>NUCLEOTIDE SEQUENCE [GENOMIC DNA]</scope>
</reference>
<reference key="2">
    <citation type="journal article" date="2004" name="Nat. Genet.">
        <title>Complete sequencing and characterization of 21,243 full-length human cDNAs.</title>
        <authorList>
            <person name="Ota T."/>
            <person name="Suzuki Y."/>
            <person name="Nishikawa T."/>
            <person name="Otsuki T."/>
            <person name="Sugiyama T."/>
            <person name="Irie R."/>
            <person name="Wakamatsu A."/>
            <person name="Hayashi K."/>
            <person name="Sato H."/>
            <person name="Nagai K."/>
            <person name="Kimura K."/>
            <person name="Makita H."/>
            <person name="Sekine M."/>
            <person name="Obayashi M."/>
            <person name="Nishi T."/>
            <person name="Shibahara T."/>
            <person name="Tanaka T."/>
            <person name="Ishii S."/>
            <person name="Yamamoto J."/>
            <person name="Saito K."/>
            <person name="Kawai Y."/>
            <person name="Isono Y."/>
            <person name="Nakamura Y."/>
            <person name="Nagahari K."/>
            <person name="Murakami K."/>
            <person name="Yasuda T."/>
            <person name="Iwayanagi T."/>
            <person name="Wagatsuma M."/>
            <person name="Shiratori A."/>
            <person name="Sudo H."/>
            <person name="Hosoiri T."/>
            <person name="Kaku Y."/>
            <person name="Kodaira H."/>
            <person name="Kondo H."/>
            <person name="Sugawara M."/>
            <person name="Takahashi M."/>
            <person name="Kanda K."/>
            <person name="Yokoi T."/>
            <person name="Furuya T."/>
            <person name="Kikkawa E."/>
            <person name="Omura Y."/>
            <person name="Abe K."/>
            <person name="Kamihara K."/>
            <person name="Katsuta N."/>
            <person name="Sato K."/>
            <person name="Tanikawa M."/>
            <person name="Yamazaki M."/>
            <person name="Ninomiya K."/>
            <person name="Ishibashi T."/>
            <person name="Yamashita H."/>
            <person name="Murakawa K."/>
            <person name="Fujimori K."/>
            <person name="Tanai H."/>
            <person name="Kimata M."/>
            <person name="Watanabe M."/>
            <person name="Hiraoka S."/>
            <person name="Chiba Y."/>
            <person name="Ishida S."/>
            <person name="Ono Y."/>
            <person name="Takiguchi S."/>
            <person name="Watanabe S."/>
            <person name="Yosida M."/>
            <person name="Hotuta T."/>
            <person name="Kusano J."/>
            <person name="Kanehori K."/>
            <person name="Takahashi-Fujii A."/>
            <person name="Hara H."/>
            <person name="Tanase T.-O."/>
            <person name="Nomura Y."/>
            <person name="Togiya S."/>
            <person name="Komai F."/>
            <person name="Hara R."/>
            <person name="Takeuchi K."/>
            <person name="Arita M."/>
            <person name="Imose N."/>
            <person name="Musashino K."/>
            <person name="Yuuki H."/>
            <person name="Oshima A."/>
            <person name="Sasaki N."/>
            <person name="Aotsuka S."/>
            <person name="Yoshikawa Y."/>
            <person name="Matsunawa H."/>
            <person name="Ichihara T."/>
            <person name="Shiohata N."/>
            <person name="Sano S."/>
            <person name="Moriya S."/>
            <person name="Momiyama H."/>
            <person name="Satoh N."/>
            <person name="Takami S."/>
            <person name="Terashima Y."/>
            <person name="Suzuki O."/>
            <person name="Nakagawa S."/>
            <person name="Senoh A."/>
            <person name="Mizoguchi H."/>
            <person name="Goto Y."/>
            <person name="Shimizu F."/>
            <person name="Wakebe H."/>
            <person name="Hishigaki H."/>
            <person name="Watanabe T."/>
            <person name="Sugiyama A."/>
            <person name="Takemoto M."/>
            <person name="Kawakami B."/>
            <person name="Yamazaki M."/>
            <person name="Watanabe K."/>
            <person name="Kumagai A."/>
            <person name="Itakura S."/>
            <person name="Fukuzumi Y."/>
            <person name="Fujimori Y."/>
            <person name="Komiyama M."/>
            <person name="Tashiro H."/>
            <person name="Tanigami A."/>
            <person name="Fujiwara T."/>
            <person name="Ono T."/>
            <person name="Yamada K."/>
            <person name="Fujii Y."/>
            <person name="Ozaki K."/>
            <person name="Hirao M."/>
            <person name="Ohmori Y."/>
            <person name="Kawabata A."/>
            <person name="Hikiji T."/>
            <person name="Kobatake N."/>
            <person name="Inagaki H."/>
            <person name="Ikema Y."/>
            <person name="Okamoto S."/>
            <person name="Okitani R."/>
            <person name="Kawakami T."/>
            <person name="Noguchi S."/>
            <person name="Itoh T."/>
            <person name="Shigeta K."/>
            <person name="Senba T."/>
            <person name="Matsumura K."/>
            <person name="Nakajima Y."/>
            <person name="Mizuno T."/>
            <person name="Morinaga M."/>
            <person name="Sasaki M."/>
            <person name="Togashi T."/>
            <person name="Oyama M."/>
            <person name="Hata H."/>
            <person name="Watanabe M."/>
            <person name="Komatsu T."/>
            <person name="Mizushima-Sugano J."/>
            <person name="Satoh T."/>
            <person name="Shirai Y."/>
            <person name="Takahashi Y."/>
            <person name="Nakagawa K."/>
            <person name="Okumura K."/>
            <person name="Nagase T."/>
            <person name="Nomura N."/>
            <person name="Kikuchi H."/>
            <person name="Masuho Y."/>
            <person name="Yamashita R."/>
            <person name="Nakai K."/>
            <person name="Yada T."/>
            <person name="Nakamura Y."/>
            <person name="Ohara O."/>
            <person name="Isogai T."/>
            <person name="Sugano S."/>
        </authorList>
    </citation>
    <scope>NUCLEOTIDE SEQUENCE [LARGE SCALE MRNA] (ISOFORM 1)</scope>
    <source>
        <tissue>Liver</tissue>
    </source>
</reference>
<reference key="3">
    <citation type="journal article" date="2006" name="Nature">
        <title>Analysis of the DNA sequence and duplication history of human chromosome 15.</title>
        <authorList>
            <person name="Zody M.C."/>
            <person name="Garber M."/>
            <person name="Sharpe T."/>
            <person name="Young S.K."/>
            <person name="Rowen L."/>
            <person name="O'Neill K."/>
            <person name="Whittaker C.A."/>
            <person name="Kamal M."/>
            <person name="Chang J.L."/>
            <person name="Cuomo C.A."/>
            <person name="Dewar K."/>
            <person name="FitzGerald M.G."/>
            <person name="Kodira C.D."/>
            <person name="Madan A."/>
            <person name="Qin S."/>
            <person name="Yang X."/>
            <person name="Abbasi N."/>
            <person name="Abouelleil A."/>
            <person name="Arachchi H.M."/>
            <person name="Baradarani L."/>
            <person name="Birditt B."/>
            <person name="Bloom S."/>
            <person name="Bloom T."/>
            <person name="Borowsky M.L."/>
            <person name="Burke J."/>
            <person name="Butler J."/>
            <person name="Cook A."/>
            <person name="DeArellano K."/>
            <person name="DeCaprio D."/>
            <person name="Dorris L. III"/>
            <person name="Dors M."/>
            <person name="Eichler E.E."/>
            <person name="Engels R."/>
            <person name="Fahey J."/>
            <person name="Fleetwood P."/>
            <person name="Friedman C."/>
            <person name="Gearin G."/>
            <person name="Hall J.L."/>
            <person name="Hensley G."/>
            <person name="Johnson E."/>
            <person name="Jones C."/>
            <person name="Kamat A."/>
            <person name="Kaur A."/>
            <person name="Locke D.P."/>
            <person name="Madan A."/>
            <person name="Munson G."/>
            <person name="Jaffe D.B."/>
            <person name="Lui A."/>
            <person name="Macdonald P."/>
            <person name="Mauceli E."/>
            <person name="Naylor J.W."/>
            <person name="Nesbitt R."/>
            <person name="Nicol R."/>
            <person name="O'Leary S.B."/>
            <person name="Ratcliffe A."/>
            <person name="Rounsley S."/>
            <person name="She X."/>
            <person name="Sneddon K.M.B."/>
            <person name="Stewart S."/>
            <person name="Sougnez C."/>
            <person name="Stone S.M."/>
            <person name="Topham K."/>
            <person name="Vincent D."/>
            <person name="Wang S."/>
            <person name="Zimmer A.R."/>
            <person name="Birren B.W."/>
            <person name="Hood L."/>
            <person name="Lander E.S."/>
            <person name="Nusbaum C."/>
        </authorList>
    </citation>
    <scope>NUCLEOTIDE SEQUENCE [LARGE SCALE GENOMIC DNA]</scope>
</reference>
<reference key="4">
    <citation type="submission" date="2005-07" db="EMBL/GenBank/DDBJ databases">
        <authorList>
            <person name="Mural R.J."/>
            <person name="Istrail S."/>
            <person name="Sutton G.G."/>
            <person name="Florea L."/>
            <person name="Halpern A.L."/>
            <person name="Mobarry C.M."/>
            <person name="Lippert R."/>
            <person name="Walenz B."/>
            <person name="Shatkay H."/>
            <person name="Dew I."/>
            <person name="Miller J.R."/>
            <person name="Flanigan M.J."/>
            <person name="Edwards N.J."/>
            <person name="Bolanos R."/>
            <person name="Fasulo D."/>
            <person name="Halldorsson B.V."/>
            <person name="Hannenhalli S."/>
            <person name="Turner R."/>
            <person name="Yooseph S."/>
            <person name="Lu F."/>
            <person name="Nusskern D.R."/>
            <person name="Shue B.C."/>
            <person name="Zheng X.H."/>
            <person name="Zhong F."/>
            <person name="Delcher A.L."/>
            <person name="Huson D.H."/>
            <person name="Kravitz S.A."/>
            <person name="Mouchard L."/>
            <person name="Reinert K."/>
            <person name="Remington K.A."/>
            <person name="Clark A.G."/>
            <person name="Waterman M.S."/>
            <person name="Eichler E.E."/>
            <person name="Adams M.D."/>
            <person name="Hunkapiller M.W."/>
            <person name="Myers E.W."/>
            <person name="Venter J.C."/>
        </authorList>
    </citation>
    <scope>NUCLEOTIDE SEQUENCE [LARGE SCALE GENOMIC DNA]</scope>
</reference>
<reference key="5">
    <citation type="journal article" date="2004" name="Genome Res.">
        <title>The status, quality, and expansion of the NIH full-length cDNA project: the Mammalian Gene Collection (MGC).</title>
        <authorList>
            <consortium name="The MGC Project Team"/>
        </authorList>
    </citation>
    <scope>NUCLEOTIDE SEQUENCE [LARGE SCALE MRNA] (ISOFORMS 1 AND 2)</scope>
    <source>
        <tissue>Colon</tissue>
    </source>
</reference>
<reference key="6">
    <citation type="journal article" date="1992" name="Electrophoresis">
        <title>Human liver protein map: a reference database established by microsequencing and gel comparison.</title>
        <authorList>
            <person name="Hochstrasser D.F."/>
            <person name="Frutiger S."/>
            <person name="Paquet N."/>
            <person name="Bairoch A."/>
            <person name="Ravier F."/>
            <person name="Pasquali C."/>
            <person name="Sanchez J.-C."/>
            <person name="Tissot J.-D."/>
            <person name="Bjellqvist B."/>
            <person name="Vargas R."/>
            <person name="Appel R.D."/>
            <person name="Hughes G.J."/>
        </authorList>
    </citation>
    <scope>PROTEIN SEQUENCE OF 2-12</scope>
    <source>
        <tissue>Liver</tissue>
    </source>
</reference>
<reference key="7">
    <citation type="journal article" date="2006" name="J. Invest. Dermatol.">
        <title>GTP cyclohydrolase feedback regulatory protein controls cofactor 6-tetrahydrobiopterin synthesis in the cytosol and in the nucleus of epidermal keratinocytes and melanocytes.</title>
        <authorList>
            <person name="Chavan B."/>
            <person name="Gillbro J.M."/>
            <person name="Rokos H."/>
            <person name="Schallreuter K.U."/>
        </authorList>
    </citation>
    <scope>FUNCTION</scope>
    <scope>SUBCELLULAR LOCATION</scope>
    <scope>TISSUE SPECIFICITY</scope>
</reference>
<reference key="8">
    <citation type="journal article" date="2006" name="J. Neurochem.">
        <title>A yeast 2-hybrid analysis of human GTP cyclohydrolase I protein interactions.</title>
        <authorList>
            <person name="Swick L."/>
            <person name="Kapatos G."/>
        </authorList>
    </citation>
    <scope>INTERACTION WITH GCH1</scope>
</reference>
<reference key="9">
    <citation type="journal article" date="2011" name="BMC Syst. Biol.">
        <title>Initial characterization of the human central proteome.</title>
        <authorList>
            <person name="Burkard T.R."/>
            <person name="Planyavsky M."/>
            <person name="Kaupe I."/>
            <person name="Breitwieser F.P."/>
            <person name="Buerckstuemmer T."/>
            <person name="Bennett K.L."/>
            <person name="Superti-Furga G."/>
            <person name="Colinge J."/>
        </authorList>
    </citation>
    <scope>IDENTIFICATION BY MASS SPECTROMETRY [LARGE SCALE ANALYSIS]</scope>
</reference>
<reference key="10">
    <citation type="journal article" date="2014" name="J. Proteomics">
        <title>An enzyme assisted RP-RPLC approach for in-depth analysis of human liver phosphoproteome.</title>
        <authorList>
            <person name="Bian Y."/>
            <person name="Song C."/>
            <person name="Cheng K."/>
            <person name="Dong M."/>
            <person name="Wang F."/>
            <person name="Huang J."/>
            <person name="Sun D."/>
            <person name="Wang L."/>
            <person name="Ye M."/>
            <person name="Zou H."/>
        </authorList>
    </citation>
    <scope>IDENTIFICATION BY MASS SPECTROMETRY [LARGE SCALE ANALYSIS]</scope>
    <source>
        <tissue>Liver</tissue>
    </source>
</reference>